<name>GAL1_FUSNN</name>
<gene>
    <name evidence="1" type="primary">galK</name>
    <name type="ordered locus">FN2107</name>
</gene>
<proteinExistence type="inferred from homology"/>
<sequence length="389" mass="43753">MLENLIKDFKEIFKYSGEVERFFSPGRVNLIGEHTDYNGGFVFPCALDFGTYAVVKKREDKTFKMYSKNFENLGIIEFNLDNLIYDKKDDWANYPKGVIKTFLDRNYKIDSGFDVLFFGNIPNGAGLSSSASIEVLTAVILKDLFKLDVDIIEMVKMCQVAENKFIGVNSGIMDQFAVGMGKKDNAILLDCNTLKYEYVPVKLVNMSIVIANTNKKRGLADSKYNERRTSCEEAVKVLNNNEVNIKYLGELTVTEFEKVKHYITDEEQLKRATHAVTENERAKIAVEFLKKDDIAEFGKLMNKSHTSLRDDYEVTGLELDSLVEAAWEEKGTVGSRMTGAGFGGCTVSIVENDYVDSFIKNVGKKYKEKTGLEASFYIANIGDGAGKVK</sequence>
<reference key="1">
    <citation type="journal article" date="2002" name="J. Bacteriol.">
        <title>Genome sequence and analysis of the oral bacterium Fusobacterium nucleatum strain ATCC 25586.</title>
        <authorList>
            <person name="Kapatral V."/>
            <person name="Anderson I."/>
            <person name="Ivanova N."/>
            <person name="Reznik G."/>
            <person name="Los T."/>
            <person name="Lykidis A."/>
            <person name="Bhattacharyya A."/>
            <person name="Bartman A."/>
            <person name="Gardner W."/>
            <person name="Grechkin G."/>
            <person name="Zhu L."/>
            <person name="Vasieva O."/>
            <person name="Chu L."/>
            <person name="Kogan Y."/>
            <person name="Chaga O."/>
            <person name="Goltsman E."/>
            <person name="Bernal A."/>
            <person name="Larsen N."/>
            <person name="D'Souza M."/>
            <person name="Walunas T."/>
            <person name="Pusch G."/>
            <person name="Haselkorn R."/>
            <person name="Fonstein M."/>
            <person name="Kyrpides N.C."/>
            <person name="Overbeek R."/>
        </authorList>
    </citation>
    <scope>NUCLEOTIDE SEQUENCE [LARGE SCALE GENOMIC DNA]</scope>
    <source>
        <strain>ATCC 25586 / DSM 15643 / BCRC 10681 / CIP 101130 / JCM 8532 / KCTC 2640 / LMG 13131 / VPI 4355</strain>
    </source>
</reference>
<feature type="chain" id="PRO_0000184611" description="Galactokinase">
    <location>
        <begin position="1"/>
        <end position="389"/>
    </location>
</feature>
<feature type="active site" description="Proton acceptor" evidence="1">
    <location>
        <position position="174"/>
    </location>
</feature>
<feature type="binding site" evidence="1">
    <location>
        <begin position="33"/>
        <end position="36"/>
    </location>
    <ligand>
        <name>substrate</name>
    </ligand>
</feature>
<feature type="binding site" evidence="1">
    <location>
        <position position="67"/>
    </location>
    <ligand>
        <name>ATP</name>
        <dbReference type="ChEBI" id="CHEBI:30616"/>
    </ligand>
</feature>
<feature type="binding site" evidence="1">
    <location>
        <begin position="124"/>
        <end position="130"/>
    </location>
    <ligand>
        <name>ATP</name>
        <dbReference type="ChEBI" id="CHEBI:30616"/>
    </ligand>
</feature>
<feature type="binding site" evidence="1">
    <location>
        <position position="130"/>
    </location>
    <ligand>
        <name>Mg(2+)</name>
        <dbReference type="ChEBI" id="CHEBI:18420"/>
    </ligand>
</feature>
<feature type="binding site" evidence="1">
    <location>
        <position position="162"/>
    </location>
    <ligand>
        <name>Mg(2+)</name>
        <dbReference type="ChEBI" id="CHEBI:18420"/>
    </ligand>
</feature>
<feature type="binding site" evidence="1">
    <location>
        <position position="224"/>
    </location>
    <ligand>
        <name>substrate</name>
    </ligand>
</feature>
<feature type="site" description="Transition state stabilizer" evidence="1">
    <location>
        <position position="27"/>
    </location>
</feature>
<organism>
    <name type="scientific">Fusobacterium nucleatum subsp. nucleatum (strain ATCC 25586 / DSM 15643 / BCRC 10681 / CIP 101130 / JCM 8532 / KCTC 2640 / LMG 13131 / VPI 4355)</name>
    <dbReference type="NCBI Taxonomy" id="190304"/>
    <lineage>
        <taxon>Bacteria</taxon>
        <taxon>Fusobacteriati</taxon>
        <taxon>Fusobacteriota</taxon>
        <taxon>Fusobacteriia</taxon>
        <taxon>Fusobacteriales</taxon>
        <taxon>Fusobacteriaceae</taxon>
        <taxon>Fusobacterium</taxon>
    </lineage>
</organism>
<evidence type="ECO:0000255" key="1">
    <source>
        <dbReference type="HAMAP-Rule" id="MF_00246"/>
    </source>
</evidence>
<protein>
    <recommendedName>
        <fullName evidence="1">Galactokinase</fullName>
        <ecNumber evidence="1">2.7.1.6</ecNumber>
    </recommendedName>
    <alternativeName>
        <fullName evidence="1">Galactose kinase</fullName>
    </alternativeName>
</protein>
<keyword id="KW-0067">ATP-binding</keyword>
<keyword id="KW-0119">Carbohydrate metabolism</keyword>
<keyword id="KW-0963">Cytoplasm</keyword>
<keyword id="KW-0299">Galactose metabolism</keyword>
<keyword id="KW-0418">Kinase</keyword>
<keyword id="KW-0460">Magnesium</keyword>
<keyword id="KW-0479">Metal-binding</keyword>
<keyword id="KW-0547">Nucleotide-binding</keyword>
<keyword id="KW-1185">Reference proteome</keyword>
<keyword id="KW-0808">Transferase</keyword>
<accession>Q8RHD0</accession>
<comment type="function">
    <text evidence="1">Catalyzes the transfer of the gamma-phosphate of ATP to D-galactose to form alpha-D-galactose-1-phosphate (Gal-1-P).</text>
</comment>
<comment type="catalytic activity">
    <reaction evidence="1">
        <text>alpha-D-galactose + ATP = alpha-D-galactose 1-phosphate + ADP + H(+)</text>
        <dbReference type="Rhea" id="RHEA:13553"/>
        <dbReference type="ChEBI" id="CHEBI:15378"/>
        <dbReference type="ChEBI" id="CHEBI:28061"/>
        <dbReference type="ChEBI" id="CHEBI:30616"/>
        <dbReference type="ChEBI" id="CHEBI:58336"/>
        <dbReference type="ChEBI" id="CHEBI:456216"/>
        <dbReference type="EC" id="2.7.1.6"/>
    </reaction>
</comment>
<comment type="pathway">
    <text evidence="1">Carbohydrate metabolism; galactose metabolism.</text>
</comment>
<comment type="subcellular location">
    <subcellularLocation>
        <location evidence="1">Cytoplasm</location>
    </subcellularLocation>
</comment>
<comment type="similarity">
    <text evidence="1">Belongs to the GHMP kinase family. GalK subfamily.</text>
</comment>
<dbReference type="EC" id="2.7.1.6" evidence="1"/>
<dbReference type="EMBL" id="AE009951">
    <property type="protein sequence ID" value="AAL94191.1"/>
    <property type="molecule type" value="Genomic_DNA"/>
</dbReference>
<dbReference type="RefSeq" id="NP_602892.1">
    <property type="nucleotide sequence ID" value="NC_003454.1"/>
</dbReference>
<dbReference type="RefSeq" id="WP_011016043.1">
    <property type="nucleotide sequence ID" value="NZ_CP084110.1"/>
</dbReference>
<dbReference type="SMR" id="Q8RHD0"/>
<dbReference type="FunCoup" id="Q8RHD0">
    <property type="interactions" value="259"/>
</dbReference>
<dbReference type="STRING" id="190304.FN2107"/>
<dbReference type="PaxDb" id="190304-FN2107"/>
<dbReference type="EnsemblBacteria" id="AAL94191">
    <property type="protein sequence ID" value="AAL94191"/>
    <property type="gene ID" value="FN2107"/>
</dbReference>
<dbReference type="KEGG" id="fnu:FN2107"/>
<dbReference type="PATRIC" id="fig|190304.8.peg.569"/>
<dbReference type="eggNOG" id="COG0153">
    <property type="taxonomic scope" value="Bacteria"/>
</dbReference>
<dbReference type="HOGENOM" id="CLU_017814_2_1_0"/>
<dbReference type="InParanoid" id="Q8RHD0"/>
<dbReference type="BioCyc" id="FNUC190304:G1FZS-592-MONOMER"/>
<dbReference type="UniPathway" id="UPA00214"/>
<dbReference type="Proteomes" id="UP000002521">
    <property type="component" value="Chromosome"/>
</dbReference>
<dbReference type="GO" id="GO:0005829">
    <property type="term" value="C:cytosol"/>
    <property type="evidence" value="ECO:0000318"/>
    <property type="project" value="GO_Central"/>
</dbReference>
<dbReference type="GO" id="GO:0005524">
    <property type="term" value="F:ATP binding"/>
    <property type="evidence" value="ECO:0007669"/>
    <property type="project" value="UniProtKB-UniRule"/>
</dbReference>
<dbReference type="GO" id="GO:0004335">
    <property type="term" value="F:galactokinase activity"/>
    <property type="evidence" value="ECO:0000318"/>
    <property type="project" value="GO_Central"/>
</dbReference>
<dbReference type="GO" id="GO:0000287">
    <property type="term" value="F:magnesium ion binding"/>
    <property type="evidence" value="ECO:0007669"/>
    <property type="project" value="UniProtKB-UniRule"/>
</dbReference>
<dbReference type="GO" id="GO:0006012">
    <property type="term" value="P:galactose metabolic process"/>
    <property type="evidence" value="ECO:0000318"/>
    <property type="project" value="GO_Central"/>
</dbReference>
<dbReference type="FunFam" id="3.30.230.10:FF:000017">
    <property type="entry name" value="Galactokinase"/>
    <property type="match status" value="1"/>
</dbReference>
<dbReference type="FunFam" id="3.30.70.890:FF:000001">
    <property type="entry name" value="Galactokinase"/>
    <property type="match status" value="1"/>
</dbReference>
<dbReference type="Gene3D" id="3.30.230.10">
    <property type="match status" value="1"/>
</dbReference>
<dbReference type="Gene3D" id="3.30.70.890">
    <property type="entry name" value="GHMP kinase, C-terminal domain"/>
    <property type="match status" value="1"/>
</dbReference>
<dbReference type="HAMAP" id="MF_00246">
    <property type="entry name" value="Galactokinase"/>
    <property type="match status" value="1"/>
</dbReference>
<dbReference type="InterPro" id="IPR000705">
    <property type="entry name" value="Galactokinase"/>
</dbReference>
<dbReference type="InterPro" id="IPR022963">
    <property type="entry name" value="Galactokinase_bac"/>
</dbReference>
<dbReference type="InterPro" id="IPR019741">
    <property type="entry name" value="Galactokinase_CS"/>
</dbReference>
<dbReference type="InterPro" id="IPR019539">
    <property type="entry name" value="GalKase_N"/>
</dbReference>
<dbReference type="InterPro" id="IPR013750">
    <property type="entry name" value="GHMP_kinase_C_dom"/>
</dbReference>
<dbReference type="InterPro" id="IPR036554">
    <property type="entry name" value="GHMP_kinase_C_sf"/>
</dbReference>
<dbReference type="InterPro" id="IPR006204">
    <property type="entry name" value="GHMP_kinase_N_dom"/>
</dbReference>
<dbReference type="InterPro" id="IPR006203">
    <property type="entry name" value="GHMP_knse_ATP-bd_CS"/>
</dbReference>
<dbReference type="InterPro" id="IPR006206">
    <property type="entry name" value="Mevalonate/galactokinase"/>
</dbReference>
<dbReference type="InterPro" id="IPR020568">
    <property type="entry name" value="Ribosomal_Su5_D2-typ_SF"/>
</dbReference>
<dbReference type="InterPro" id="IPR014721">
    <property type="entry name" value="Ribsml_uS5_D2-typ_fold_subgr"/>
</dbReference>
<dbReference type="NCBIfam" id="TIGR00131">
    <property type="entry name" value="gal_kin"/>
    <property type="match status" value="1"/>
</dbReference>
<dbReference type="NCBIfam" id="NF003705">
    <property type="entry name" value="PRK05322.1"/>
    <property type="match status" value="1"/>
</dbReference>
<dbReference type="PANTHER" id="PTHR10457:SF7">
    <property type="entry name" value="GALACTOKINASE-RELATED"/>
    <property type="match status" value="1"/>
</dbReference>
<dbReference type="PANTHER" id="PTHR10457">
    <property type="entry name" value="MEVALONATE KINASE/GALACTOKINASE"/>
    <property type="match status" value="1"/>
</dbReference>
<dbReference type="Pfam" id="PF10509">
    <property type="entry name" value="GalKase_gal_bdg"/>
    <property type="match status" value="1"/>
</dbReference>
<dbReference type="Pfam" id="PF08544">
    <property type="entry name" value="GHMP_kinases_C"/>
    <property type="match status" value="1"/>
</dbReference>
<dbReference type="Pfam" id="PF00288">
    <property type="entry name" value="GHMP_kinases_N"/>
    <property type="match status" value="1"/>
</dbReference>
<dbReference type="PIRSF" id="PIRSF000530">
    <property type="entry name" value="Galactokinase"/>
    <property type="match status" value="1"/>
</dbReference>
<dbReference type="PRINTS" id="PR00473">
    <property type="entry name" value="GALCTOKINASE"/>
</dbReference>
<dbReference type="PRINTS" id="PR00959">
    <property type="entry name" value="MEVGALKINASE"/>
</dbReference>
<dbReference type="SUPFAM" id="SSF55060">
    <property type="entry name" value="GHMP Kinase, C-terminal domain"/>
    <property type="match status" value="1"/>
</dbReference>
<dbReference type="SUPFAM" id="SSF54211">
    <property type="entry name" value="Ribosomal protein S5 domain 2-like"/>
    <property type="match status" value="1"/>
</dbReference>
<dbReference type="PROSITE" id="PS00106">
    <property type="entry name" value="GALACTOKINASE"/>
    <property type="match status" value="1"/>
</dbReference>
<dbReference type="PROSITE" id="PS00627">
    <property type="entry name" value="GHMP_KINASES_ATP"/>
    <property type="match status" value="1"/>
</dbReference>